<evidence type="ECO:0000269" key="1">
    <source>
    </source>
</evidence>
<evidence type="ECO:0000305" key="2"/>
<evidence type="ECO:0007829" key="3">
    <source>
        <dbReference type="PDB" id="1LRI"/>
    </source>
</evidence>
<name>ELIB_PHYCR</name>
<accession>P15570</accession>
<sequence length="118" mass="12193">MNFTALLAAVAAALVGSANATACTATQQTAAYKTLVSILSDASFNQCSTDSGYSMLTAKALPTTAQYKLMCASTACNTMIKKIVTLNPPNCDLTVPTSGLVLNVYSYANGFSNKCSSL</sequence>
<dbReference type="EMBL" id="Z34459">
    <property type="protein sequence ID" value="CAA84224.1"/>
    <property type="molecule type" value="Genomic_DNA"/>
</dbReference>
<dbReference type="PIR" id="S49913">
    <property type="entry name" value="S49913"/>
</dbReference>
<dbReference type="PDB" id="1BEG">
    <property type="method" value="NMR"/>
    <property type="chains" value="A=21-118"/>
</dbReference>
<dbReference type="PDB" id="1BEO">
    <property type="method" value="X-ray"/>
    <property type="resolution" value="2.20 A"/>
    <property type="chains" value="A=21-118"/>
</dbReference>
<dbReference type="PDB" id="1BXM">
    <property type="method" value="X-ray"/>
    <property type="resolution" value="2.15 A"/>
    <property type="chains" value="A=23-118"/>
</dbReference>
<dbReference type="PDB" id="1LRI">
    <property type="method" value="X-ray"/>
    <property type="resolution" value="1.45 A"/>
    <property type="chains" value="A=21-118"/>
</dbReference>
<dbReference type="PDBsum" id="1BEG"/>
<dbReference type="PDBsum" id="1BEO"/>
<dbReference type="PDBsum" id="1BXM"/>
<dbReference type="PDBsum" id="1LRI"/>
<dbReference type="SMR" id="P15570"/>
<dbReference type="EvolutionaryTrace" id="P15570"/>
<dbReference type="GO" id="GO:0005576">
    <property type="term" value="C:extracellular region"/>
    <property type="evidence" value="ECO:0007669"/>
    <property type="project" value="UniProtKB-SubCell"/>
</dbReference>
<dbReference type="GO" id="GO:0001907">
    <property type="term" value="P:symbiont-mediated killing of host cell"/>
    <property type="evidence" value="ECO:0000314"/>
    <property type="project" value="PAMGO_VMD"/>
</dbReference>
<dbReference type="GO" id="GO:0052040">
    <property type="term" value="P:symbiont-mediated perturbation of host programmed cell death"/>
    <property type="evidence" value="ECO:0007669"/>
    <property type="project" value="UniProtKB-KW"/>
</dbReference>
<dbReference type="Gene3D" id="1.10.239.10">
    <property type="entry name" value="Elicitin domain"/>
    <property type="match status" value="1"/>
</dbReference>
<dbReference type="InterPro" id="IPR002200">
    <property type="entry name" value="Elicitin"/>
</dbReference>
<dbReference type="InterPro" id="IPR036470">
    <property type="entry name" value="Elicitin_sf"/>
</dbReference>
<dbReference type="Pfam" id="PF00964">
    <property type="entry name" value="Elicitin"/>
    <property type="match status" value="1"/>
</dbReference>
<dbReference type="PRINTS" id="PR00948">
    <property type="entry name" value="ELICITIN"/>
</dbReference>
<dbReference type="SMART" id="SM01187">
    <property type="entry name" value="Elicitin"/>
    <property type="match status" value="1"/>
</dbReference>
<dbReference type="SUPFAM" id="SSF48647">
    <property type="entry name" value="Fungal elicitin"/>
    <property type="match status" value="1"/>
</dbReference>
<organism>
    <name type="scientific">Phytophthora cryptogea</name>
    <dbReference type="NCBI Taxonomy" id="4786"/>
    <lineage>
        <taxon>Eukaryota</taxon>
        <taxon>Sar</taxon>
        <taxon>Stramenopiles</taxon>
        <taxon>Oomycota</taxon>
        <taxon>Peronosporales</taxon>
        <taxon>Peronosporaceae</taxon>
        <taxon>Phytophthora</taxon>
    </lineage>
</organism>
<proteinExistence type="evidence at protein level"/>
<comment type="function">
    <text>Induces local and distal defense responses (incompatible hypersensitive reaction) in plants from the solanaceae and cruciferae families. Elicits leaf necrosis and causes the accumulation of pathogenesis-related proteins. Might interact with the lipidic molecules of the plasma membrane.</text>
</comment>
<comment type="subcellular location">
    <subcellularLocation>
        <location>Secreted</location>
    </subcellularLocation>
</comment>
<comment type="similarity">
    <text evidence="2">Belongs to the elicitin family.</text>
</comment>
<feature type="signal peptide" evidence="1">
    <location>
        <begin position="1"/>
        <end position="20"/>
    </location>
</feature>
<feature type="chain" id="PRO_0000007795" description="Beta-elicitin cryptogein">
    <location>
        <begin position="21"/>
        <end position="118"/>
    </location>
</feature>
<feature type="disulfide bond">
    <location>
        <begin position="23"/>
        <end position="91"/>
    </location>
</feature>
<feature type="disulfide bond">
    <location>
        <begin position="47"/>
        <end position="76"/>
    </location>
</feature>
<feature type="disulfide bond">
    <location>
        <begin position="71"/>
        <end position="115"/>
    </location>
</feature>
<feature type="helix" evidence="3">
    <location>
        <begin position="25"/>
        <end position="35"/>
    </location>
</feature>
<feature type="helix" evidence="3">
    <location>
        <begin position="36"/>
        <end position="40"/>
    </location>
</feature>
<feature type="helix" evidence="3">
    <location>
        <begin position="42"/>
        <end position="51"/>
    </location>
</feature>
<feature type="turn" evidence="3">
    <location>
        <begin position="55"/>
        <end position="57"/>
    </location>
</feature>
<feature type="helix" evidence="3">
    <location>
        <begin position="64"/>
        <end position="72"/>
    </location>
</feature>
<feature type="helix" evidence="3">
    <location>
        <begin position="74"/>
        <end position="85"/>
    </location>
</feature>
<feature type="strand" evidence="3">
    <location>
        <begin position="90"/>
        <end position="94"/>
    </location>
</feature>
<feature type="turn" evidence="3">
    <location>
        <begin position="96"/>
        <end position="98"/>
    </location>
</feature>
<feature type="helix" evidence="3">
    <location>
        <begin position="104"/>
        <end position="109"/>
    </location>
</feature>
<feature type="helix" evidence="3">
    <location>
        <begin position="111"/>
        <end position="117"/>
    </location>
</feature>
<keyword id="KW-0002">3D-structure</keyword>
<keyword id="KW-0903">Direct protein sequencing</keyword>
<keyword id="KW-1015">Disulfide bond</keyword>
<keyword id="KW-0928">Hypersensitive response elicitation</keyword>
<keyword id="KW-0964">Secreted</keyword>
<keyword id="KW-0732">Signal</keyword>
<reference key="1">
    <citation type="submission" date="1994-06" db="EMBL/GenBank/DDBJ databases">
        <authorList>
            <person name="Panabieres F."/>
            <person name="Marais A."/>
            <person name="le Berre J."/>
            <person name="Penot I."/>
            <person name="Fournier D."/>
            <person name="Ricci P."/>
        </authorList>
    </citation>
    <scope>NUCLEOTIDE SEQUENCE [GENOMIC DNA]</scope>
    <source>
        <strain>Isolate 52</strain>
    </source>
</reference>
<reference key="2">
    <citation type="journal article" date="1989" name="Eur. J. Biochem.">
        <title>Structure and activity of proteins from pathogenic fungi Phytophthora eliciting necrosis and acquired resistance in tobacco.</title>
        <authorList>
            <person name="Ricci P."/>
            <person name="Bonnet P."/>
            <person name="Huet J.-C."/>
            <person name="Sallantin M."/>
            <person name="Beauvais-Cante F."/>
            <person name="Brunetau M."/>
            <person name="Billard V."/>
            <person name="Michel G."/>
            <person name="Pernollet J.-C."/>
        </authorList>
    </citation>
    <scope>PROTEIN SEQUENCE OF 21-118</scope>
    <source>
        <strain>Isolate 52</strain>
    </source>
</reference>
<reference key="3">
    <citation type="journal article" date="1996" name="Structure">
        <title>Crystal structure of a fungal elicitor secreted by Phytophthora cryptogea, a member of a novel class of plant necrotic proteins.</title>
        <authorList>
            <person name="Boissy G."/>
            <person name="de la Fortelle E."/>
            <person name="Kahn R."/>
            <person name="Huet J.-C."/>
            <person name="Bricogne G."/>
            <person name="Pernollet J.-C."/>
            <person name="Brunie S."/>
        </authorList>
    </citation>
    <scope>X-RAY CRYSTALLOGRAPHY (2.2 ANGSTROMS)</scope>
</reference>
<reference key="4">
    <citation type="journal article" date="1997" name="Protein Sci.">
        <title>Three-dimensional solution structure of beta cryptogein, a beta elicitin secreted by a phytopathogenic fungus Phytophthora cryptogea.</title>
        <authorList>
            <person name="Fefeu S."/>
            <person name="Bouaziz S."/>
            <person name="Huet J.-C."/>
            <person name="Pernollet J.-C."/>
            <person name="Guittet E."/>
        </authorList>
    </citation>
    <scope>STRUCTURE BY NMR</scope>
</reference>
<protein>
    <recommendedName>
        <fullName>Beta-elicitin cryptogein</fullName>
        <shortName>CRY</shortName>
    </recommendedName>
</protein>